<gene>
    <name type="primary">CWC24</name>
    <name type="ordered locus">CNBH4040</name>
</gene>
<feature type="chain" id="PRO_0000410243" description="Pre-mRNA-splicing factor CWC24">
    <location>
        <begin position="1"/>
        <end position="329"/>
    </location>
</feature>
<feature type="zinc finger region" description="C3H1-type" evidence="3">
    <location>
        <begin position="177"/>
        <end position="205"/>
    </location>
</feature>
<feature type="zinc finger region" description="RING-type" evidence="2">
    <location>
        <begin position="237"/>
        <end position="275"/>
    </location>
</feature>
<feature type="region of interest" description="Disordered" evidence="4">
    <location>
        <begin position="1"/>
        <end position="86"/>
    </location>
</feature>
<feature type="region of interest" description="Disordered" evidence="4">
    <location>
        <begin position="298"/>
        <end position="329"/>
    </location>
</feature>
<feature type="compositionally biased region" description="Acidic residues" evidence="4">
    <location>
        <begin position="72"/>
        <end position="86"/>
    </location>
</feature>
<feature type="compositionally biased region" description="Basic and acidic residues" evidence="4">
    <location>
        <begin position="298"/>
        <end position="308"/>
    </location>
</feature>
<feature type="compositionally biased region" description="Gly residues" evidence="4">
    <location>
        <begin position="310"/>
        <end position="320"/>
    </location>
</feature>
<name>CWC24_CRYNB</name>
<reference key="1">
    <citation type="journal article" date="2005" name="Science">
        <title>The genome of the basidiomycetous yeast and human pathogen Cryptococcus neoformans.</title>
        <authorList>
            <person name="Loftus B.J."/>
            <person name="Fung E."/>
            <person name="Roncaglia P."/>
            <person name="Rowley D."/>
            <person name="Amedeo P."/>
            <person name="Bruno D."/>
            <person name="Vamathevan J."/>
            <person name="Miranda M."/>
            <person name="Anderson I.J."/>
            <person name="Fraser J.A."/>
            <person name="Allen J.E."/>
            <person name="Bosdet I.E."/>
            <person name="Brent M.R."/>
            <person name="Chiu R."/>
            <person name="Doering T.L."/>
            <person name="Donlin M.J."/>
            <person name="D'Souza C.A."/>
            <person name="Fox D.S."/>
            <person name="Grinberg V."/>
            <person name="Fu J."/>
            <person name="Fukushima M."/>
            <person name="Haas B.J."/>
            <person name="Huang J.C."/>
            <person name="Janbon G."/>
            <person name="Jones S.J.M."/>
            <person name="Koo H.L."/>
            <person name="Krzywinski M.I."/>
            <person name="Kwon-Chung K.J."/>
            <person name="Lengeler K.B."/>
            <person name="Maiti R."/>
            <person name="Marra M.A."/>
            <person name="Marra R.E."/>
            <person name="Mathewson C.A."/>
            <person name="Mitchell T.G."/>
            <person name="Pertea M."/>
            <person name="Riggs F.R."/>
            <person name="Salzberg S.L."/>
            <person name="Schein J.E."/>
            <person name="Shvartsbeyn A."/>
            <person name="Shin H."/>
            <person name="Shumway M."/>
            <person name="Specht C.A."/>
            <person name="Suh B.B."/>
            <person name="Tenney A."/>
            <person name="Utterback T.R."/>
            <person name="Wickes B.L."/>
            <person name="Wortman J.R."/>
            <person name="Wye N.H."/>
            <person name="Kronstad J.W."/>
            <person name="Lodge J.K."/>
            <person name="Heitman J."/>
            <person name="Davis R.W."/>
            <person name="Fraser C.M."/>
            <person name="Hyman R.W."/>
        </authorList>
    </citation>
    <scope>NUCLEOTIDE SEQUENCE [LARGE SCALE GENOMIC DNA]</scope>
    <source>
        <strain>B-3501A</strain>
    </source>
</reference>
<accession>P0CQ65</accession>
<accession>Q55MN0</accession>
<accession>Q5KB05</accession>
<evidence type="ECO:0000250" key="1"/>
<evidence type="ECO:0000255" key="2">
    <source>
        <dbReference type="PROSITE-ProRule" id="PRU00175"/>
    </source>
</evidence>
<evidence type="ECO:0000255" key="3">
    <source>
        <dbReference type="PROSITE-ProRule" id="PRU00723"/>
    </source>
</evidence>
<evidence type="ECO:0000256" key="4">
    <source>
        <dbReference type="SAM" id="MobiDB-lite"/>
    </source>
</evidence>
<evidence type="ECO:0000305" key="5"/>
<keyword id="KW-0238">DNA-binding</keyword>
<keyword id="KW-0479">Metal-binding</keyword>
<keyword id="KW-0507">mRNA processing</keyword>
<keyword id="KW-0508">mRNA splicing</keyword>
<keyword id="KW-0539">Nucleus</keyword>
<keyword id="KW-0747">Spliceosome</keyword>
<keyword id="KW-0862">Zinc</keyword>
<keyword id="KW-0863">Zinc-finger</keyword>
<sequence>MSEAPAPVVTFKKGPSRRPAQSRQRRRSPSPLDPVAEASASASGSNVVRPERKSLANPLVQGTKRRRTNANNEEEEDGVGGGLDEFDYAAEGGLTRKGDELATRANDWDLEDVDGQGQRDKKVRLDEDGEIVTDDGLYRGASAYLPTINKTRETLDKKMKSGPIKATSHVRTITLMDYQPDVCKDYKETGFCGYGDSCKFLHDRGDYLAGWQLDKLPEEGVREVEEEDEEEEVPFACLICRQPFTQPVVTKCGHYFCMGCAAKRFQKSPKCYACGAPTQGIFNIADKVIAKIEARNKARREAREERAEQTGGGGIEIGGGSDEEGSDEE</sequence>
<dbReference type="EMBL" id="AAEY01000042">
    <property type="protein sequence ID" value="EAL19305.1"/>
    <property type="molecule type" value="Genomic_DNA"/>
</dbReference>
<dbReference type="RefSeq" id="XP_773952.1">
    <property type="nucleotide sequence ID" value="XM_768859.1"/>
</dbReference>
<dbReference type="EnsemblFungi" id="AAW45613">
    <property type="protein sequence ID" value="AAW45613"/>
    <property type="gene ID" value="CNI04230"/>
</dbReference>
<dbReference type="GeneID" id="4937932"/>
<dbReference type="KEGG" id="cnb:CNBH4040"/>
<dbReference type="VEuPathDB" id="FungiDB:CNBH4040"/>
<dbReference type="HOGENOM" id="CLU_050460_1_1_1"/>
<dbReference type="OrthoDB" id="6591at5206"/>
<dbReference type="GO" id="GO:0005684">
    <property type="term" value="C:U2-type spliceosomal complex"/>
    <property type="evidence" value="ECO:0007669"/>
    <property type="project" value="TreeGrafter"/>
</dbReference>
<dbReference type="GO" id="GO:0003677">
    <property type="term" value="F:DNA binding"/>
    <property type="evidence" value="ECO:0007669"/>
    <property type="project" value="UniProtKB-KW"/>
</dbReference>
<dbReference type="GO" id="GO:0008270">
    <property type="term" value="F:zinc ion binding"/>
    <property type="evidence" value="ECO:0007669"/>
    <property type="project" value="UniProtKB-KW"/>
</dbReference>
<dbReference type="GO" id="GO:0006397">
    <property type="term" value="P:mRNA processing"/>
    <property type="evidence" value="ECO:0007669"/>
    <property type="project" value="UniProtKB-KW"/>
</dbReference>
<dbReference type="GO" id="GO:0034247">
    <property type="term" value="P:snoRNA splicing"/>
    <property type="evidence" value="ECO:0007669"/>
    <property type="project" value="TreeGrafter"/>
</dbReference>
<dbReference type="CDD" id="cd16539">
    <property type="entry name" value="RING-HC_RNF113A_B"/>
    <property type="match status" value="1"/>
</dbReference>
<dbReference type="FunFam" id="3.30.40.10:FF:000045">
    <property type="entry name" value="RING finger protein 113A"/>
    <property type="match status" value="1"/>
</dbReference>
<dbReference type="Gene3D" id="4.10.1000.10">
    <property type="entry name" value="Zinc finger, CCCH-type"/>
    <property type="match status" value="1"/>
</dbReference>
<dbReference type="Gene3D" id="3.30.40.10">
    <property type="entry name" value="Zinc/RING finger domain, C3HC4 (zinc finger)"/>
    <property type="match status" value="1"/>
</dbReference>
<dbReference type="InterPro" id="IPR039971">
    <property type="entry name" value="CWC24-like"/>
</dbReference>
<dbReference type="InterPro" id="IPR000571">
    <property type="entry name" value="Znf_CCCH"/>
</dbReference>
<dbReference type="InterPro" id="IPR036855">
    <property type="entry name" value="Znf_CCCH_sf"/>
</dbReference>
<dbReference type="InterPro" id="IPR001841">
    <property type="entry name" value="Znf_RING"/>
</dbReference>
<dbReference type="InterPro" id="IPR013083">
    <property type="entry name" value="Znf_RING/FYVE/PHD"/>
</dbReference>
<dbReference type="InterPro" id="IPR017907">
    <property type="entry name" value="Znf_RING_CS"/>
</dbReference>
<dbReference type="PANTHER" id="PTHR12930:SF0">
    <property type="entry name" value="RING FINGER PROTEIN 113B"/>
    <property type="match status" value="1"/>
</dbReference>
<dbReference type="PANTHER" id="PTHR12930">
    <property type="entry name" value="ZINC FINGER PROTEIN 183"/>
    <property type="match status" value="1"/>
</dbReference>
<dbReference type="Pfam" id="PF13920">
    <property type="entry name" value="zf-C3HC4_3"/>
    <property type="match status" value="1"/>
</dbReference>
<dbReference type="Pfam" id="PF00642">
    <property type="entry name" value="zf-CCCH"/>
    <property type="match status" value="1"/>
</dbReference>
<dbReference type="SMART" id="SM00184">
    <property type="entry name" value="RING"/>
    <property type="match status" value="1"/>
</dbReference>
<dbReference type="SMART" id="SM00356">
    <property type="entry name" value="ZnF_C3H1"/>
    <property type="match status" value="1"/>
</dbReference>
<dbReference type="SUPFAM" id="SSF90229">
    <property type="entry name" value="CCCH zinc finger"/>
    <property type="match status" value="1"/>
</dbReference>
<dbReference type="SUPFAM" id="SSF57850">
    <property type="entry name" value="RING/U-box"/>
    <property type="match status" value="1"/>
</dbReference>
<dbReference type="PROSITE" id="PS50103">
    <property type="entry name" value="ZF_C3H1"/>
    <property type="match status" value="1"/>
</dbReference>
<dbReference type="PROSITE" id="PS00518">
    <property type="entry name" value="ZF_RING_1"/>
    <property type="match status" value="1"/>
</dbReference>
<dbReference type="PROSITE" id="PS50089">
    <property type="entry name" value="ZF_RING_2"/>
    <property type="match status" value="1"/>
</dbReference>
<organism>
    <name type="scientific">Cryptococcus neoformans var. neoformans serotype D (strain B-3501A)</name>
    <name type="common">Filobasidiella neoformans</name>
    <dbReference type="NCBI Taxonomy" id="283643"/>
    <lineage>
        <taxon>Eukaryota</taxon>
        <taxon>Fungi</taxon>
        <taxon>Dikarya</taxon>
        <taxon>Basidiomycota</taxon>
        <taxon>Agaricomycotina</taxon>
        <taxon>Tremellomycetes</taxon>
        <taxon>Tremellales</taxon>
        <taxon>Cryptococcaceae</taxon>
        <taxon>Cryptococcus</taxon>
        <taxon>Cryptococcus neoformans species complex</taxon>
    </lineage>
</organism>
<proteinExistence type="inferred from homology"/>
<protein>
    <recommendedName>
        <fullName>Pre-mRNA-splicing factor CWC24</fullName>
    </recommendedName>
</protein>
<comment type="function">
    <text evidence="1">Involved in pre-mRNA splicing.</text>
</comment>
<comment type="subunit">
    <text evidence="1">Associated with the spliceosome.</text>
</comment>
<comment type="subcellular location">
    <subcellularLocation>
        <location evidence="1">Nucleus</location>
    </subcellularLocation>
</comment>
<comment type="similarity">
    <text evidence="5">Belongs to the CWC24 family.</text>
</comment>